<name>PP388_ARATH</name>
<keyword id="KW-0496">Mitochondrion</keyword>
<keyword id="KW-1185">Reference proteome</keyword>
<keyword id="KW-0677">Repeat</keyword>
<keyword id="KW-0809">Transit peptide</keyword>
<proteinExistence type="evidence at transcript level"/>
<dbReference type="EMBL" id="AB005242">
    <property type="protein sequence ID" value="BAB09609.1"/>
    <property type="molecule type" value="Genomic_DNA"/>
</dbReference>
<dbReference type="EMBL" id="CP002688">
    <property type="protein sequence ID" value="AED92290.1"/>
    <property type="molecule type" value="Genomic_DNA"/>
</dbReference>
<dbReference type="EMBL" id="CP002688">
    <property type="protein sequence ID" value="ANM69354.1"/>
    <property type="molecule type" value="Genomic_DNA"/>
</dbReference>
<dbReference type="EMBL" id="CP002688">
    <property type="protein sequence ID" value="ANM69355.1"/>
    <property type="molecule type" value="Genomic_DNA"/>
</dbReference>
<dbReference type="EMBL" id="CP002688">
    <property type="protein sequence ID" value="ANM69356.1"/>
    <property type="molecule type" value="Genomic_DNA"/>
</dbReference>
<dbReference type="RefSeq" id="NP_001331039.1">
    <property type="nucleotide sequence ID" value="NM_001343450.1"/>
</dbReference>
<dbReference type="RefSeq" id="NP_001331040.1">
    <property type="nucleotide sequence ID" value="NM_001343449.1"/>
</dbReference>
<dbReference type="RefSeq" id="NP_001331041.1">
    <property type="nucleotide sequence ID" value="NM_001343448.1"/>
</dbReference>
<dbReference type="RefSeq" id="NP_197146.1">
    <property type="nucleotide sequence ID" value="NM_121647.2"/>
</dbReference>
<dbReference type="SMR" id="Q9FFE3"/>
<dbReference type="FunCoup" id="Q9FFE3">
    <property type="interactions" value="22"/>
</dbReference>
<dbReference type="PaxDb" id="3702-AT5G16420.1"/>
<dbReference type="ProteomicsDB" id="249269"/>
<dbReference type="EnsemblPlants" id="AT5G16420.1">
    <property type="protein sequence ID" value="AT5G16420.1"/>
    <property type="gene ID" value="AT5G16420"/>
</dbReference>
<dbReference type="EnsemblPlants" id="AT5G16420.2">
    <property type="protein sequence ID" value="AT5G16420.2"/>
    <property type="gene ID" value="AT5G16420"/>
</dbReference>
<dbReference type="EnsemblPlants" id="AT5G16420.3">
    <property type="protein sequence ID" value="AT5G16420.3"/>
    <property type="gene ID" value="AT5G16420"/>
</dbReference>
<dbReference type="EnsemblPlants" id="AT5G16420.4">
    <property type="protein sequence ID" value="AT5G16420.4"/>
    <property type="gene ID" value="AT5G16420"/>
</dbReference>
<dbReference type="GeneID" id="831503"/>
<dbReference type="Gramene" id="AT5G16420.1">
    <property type="protein sequence ID" value="AT5G16420.1"/>
    <property type="gene ID" value="AT5G16420"/>
</dbReference>
<dbReference type="Gramene" id="AT5G16420.2">
    <property type="protein sequence ID" value="AT5G16420.2"/>
    <property type="gene ID" value="AT5G16420"/>
</dbReference>
<dbReference type="Gramene" id="AT5G16420.3">
    <property type="protein sequence ID" value="AT5G16420.3"/>
    <property type="gene ID" value="AT5G16420"/>
</dbReference>
<dbReference type="Gramene" id="AT5G16420.4">
    <property type="protein sequence ID" value="AT5G16420.4"/>
    <property type="gene ID" value="AT5G16420"/>
</dbReference>
<dbReference type="KEGG" id="ath:AT5G16420"/>
<dbReference type="Araport" id="AT5G16420"/>
<dbReference type="TAIR" id="AT5G16420"/>
<dbReference type="eggNOG" id="KOG4197">
    <property type="taxonomic scope" value="Eukaryota"/>
</dbReference>
<dbReference type="HOGENOM" id="CLU_002706_49_12_1"/>
<dbReference type="InParanoid" id="Q9FFE3"/>
<dbReference type="OMA" id="HLMFKNC"/>
<dbReference type="OrthoDB" id="185373at2759"/>
<dbReference type="PhylomeDB" id="Q9FFE3"/>
<dbReference type="PRO" id="PR:Q9FFE3"/>
<dbReference type="Proteomes" id="UP000006548">
    <property type="component" value="Chromosome 5"/>
</dbReference>
<dbReference type="ExpressionAtlas" id="Q9FFE3">
    <property type="expression patterns" value="baseline and differential"/>
</dbReference>
<dbReference type="GO" id="GO:0005739">
    <property type="term" value="C:mitochondrion"/>
    <property type="evidence" value="ECO:0007669"/>
    <property type="project" value="UniProtKB-SubCell"/>
</dbReference>
<dbReference type="Gene3D" id="1.25.40.10">
    <property type="entry name" value="Tetratricopeptide repeat domain"/>
    <property type="match status" value="4"/>
</dbReference>
<dbReference type="InterPro" id="IPR051240">
    <property type="entry name" value="Mito_RNA-Proc/Resp"/>
</dbReference>
<dbReference type="InterPro" id="IPR002885">
    <property type="entry name" value="Pentatricopeptide_rpt"/>
</dbReference>
<dbReference type="InterPro" id="IPR011990">
    <property type="entry name" value="TPR-like_helical_dom_sf"/>
</dbReference>
<dbReference type="NCBIfam" id="TIGR00756">
    <property type="entry name" value="PPR"/>
    <property type="match status" value="8"/>
</dbReference>
<dbReference type="PANTHER" id="PTHR47933">
    <property type="entry name" value="PENTATRICOPEPTIDE REPEAT-CONTAINING PROTEIN 1, MITOCHONDRIAL"/>
    <property type="match status" value="1"/>
</dbReference>
<dbReference type="PANTHER" id="PTHR47933:SF11">
    <property type="entry name" value="PENTATRICOPEPTIDE REPEAT-CONTAINING PROTEIN 2"/>
    <property type="match status" value="1"/>
</dbReference>
<dbReference type="Pfam" id="PF12854">
    <property type="entry name" value="PPR_1"/>
    <property type="match status" value="3"/>
</dbReference>
<dbReference type="Pfam" id="PF13041">
    <property type="entry name" value="PPR_2"/>
    <property type="match status" value="2"/>
</dbReference>
<dbReference type="PROSITE" id="PS51375">
    <property type="entry name" value="PPR"/>
    <property type="match status" value="12"/>
</dbReference>
<sequence>MFLSRVNPTRFPPFVASRRLFSASASAASLQQYCTEKPPIKPWPQRLFPKRLVSMITQQQNIDLALQIFLYAGKSHPGFTHNYDTYHSILFKLSRARAFDPVESLMADLRNSYPPIKCGENLFIDLLRNYGLAGRYESSMRIFLRIPDFGVKRSVRSLNTLLNVLIQNQRFDLVHAMFKNSKESFGITPNIFTCNLLVKALCKKNDIESAYKVLDEIPSMGLVPNLVTYTTILGGYVARGDMESAKRVLEEMLDRGWYPDATTYTVLMDGYCKLGRFSEAATVMDDMEKNEIEPNEVTYGVMIRALCKEKKSGEARNMFDEMLERSFMPDSSLCCKVIDALCEDHKVDEACGLWRKMLKNNCMPDNALLSTLIHWLCKEGRVTEARKLFDEFEKGSIPSLLTYNTLIAGMCEKGELTEAGRLWDDMYERKCKPNAFTYNVLIEGLSKNGNVKEGVRVLEEMLEIGCFPNKTTFLILFEGLQKLGKEEDAMKIVSMAVMNGKVDKESWELFLKKFAGELDKGVLPLKELLHEISVS</sequence>
<evidence type="ECO:0000255" key="1"/>
<evidence type="ECO:0000305" key="2"/>
<organism>
    <name type="scientific">Arabidopsis thaliana</name>
    <name type="common">Mouse-ear cress</name>
    <dbReference type="NCBI Taxonomy" id="3702"/>
    <lineage>
        <taxon>Eukaryota</taxon>
        <taxon>Viridiplantae</taxon>
        <taxon>Streptophyta</taxon>
        <taxon>Embryophyta</taxon>
        <taxon>Tracheophyta</taxon>
        <taxon>Spermatophyta</taxon>
        <taxon>Magnoliopsida</taxon>
        <taxon>eudicotyledons</taxon>
        <taxon>Gunneridae</taxon>
        <taxon>Pentapetalae</taxon>
        <taxon>rosids</taxon>
        <taxon>malvids</taxon>
        <taxon>Brassicales</taxon>
        <taxon>Brassicaceae</taxon>
        <taxon>Camelineae</taxon>
        <taxon>Arabidopsis</taxon>
    </lineage>
</organism>
<protein>
    <recommendedName>
        <fullName>Pentatricopeptide repeat-containing protein At5g16420, mitochondrial</fullName>
    </recommendedName>
</protein>
<gene>
    <name type="ordered locus">At5g16420</name>
    <name type="ORF">MQK4.15</name>
</gene>
<reference key="1">
    <citation type="journal article" date="1997" name="DNA Res.">
        <title>Structural analysis of Arabidopsis thaliana chromosome 5. I. Sequence features of the 1.6 Mb regions covered by twenty physically assigned P1 clones.</title>
        <authorList>
            <person name="Sato S."/>
            <person name="Kotani H."/>
            <person name="Nakamura Y."/>
            <person name="Kaneko T."/>
            <person name="Asamizu E."/>
            <person name="Fukami M."/>
            <person name="Miyajima N."/>
            <person name="Tabata S."/>
        </authorList>
    </citation>
    <scope>NUCLEOTIDE SEQUENCE [LARGE SCALE GENOMIC DNA]</scope>
    <source>
        <strain>cv. Columbia</strain>
    </source>
</reference>
<reference key="2">
    <citation type="journal article" date="2017" name="Plant J.">
        <title>Araport11: a complete reannotation of the Arabidopsis thaliana reference genome.</title>
        <authorList>
            <person name="Cheng C.Y."/>
            <person name="Krishnakumar V."/>
            <person name="Chan A.P."/>
            <person name="Thibaud-Nissen F."/>
            <person name="Schobel S."/>
            <person name="Town C.D."/>
        </authorList>
    </citation>
    <scope>GENOME REANNOTATION</scope>
    <source>
        <strain>cv. Columbia</strain>
    </source>
</reference>
<reference key="3">
    <citation type="journal article" date="2004" name="Plant Cell">
        <title>Genome-wide analysis of Arabidopsis pentatricopeptide repeat proteins reveals their essential role in organelle biogenesis.</title>
        <authorList>
            <person name="Lurin C."/>
            <person name="Andres C."/>
            <person name="Aubourg S."/>
            <person name="Bellaoui M."/>
            <person name="Bitton F."/>
            <person name="Bruyere C."/>
            <person name="Caboche M."/>
            <person name="Debast C."/>
            <person name="Gualberto J."/>
            <person name="Hoffmann B."/>
            <person name="Lecharny A."/>
            <person name="Le Ret M."/>
            <person name="Martin-Magniette M.-L."/>
            <person name="Mireau H."/>
            <person name="Peeters N."/>
            <person name="Renou J.-P."/>
            <person name="Szurek B."/>
            <person name="Taconnat L."/>
            <person name="Small I."/>
        </authorList>
    </citation>
    <scope>GENE FAMILY</scope>
</reference>
<comment type="subcellular location">
    <subcellularLocation>
        <location evidence="2">Mitochondrion</location>
    </subcellularLocation>
</comment>
<comment type="similarity">
    <text evidence="2">Belongs to the PPR family. P subfamily.</text>
</comment>
<comment type="online information" name="Pentatricopeptide repeat proteins">
    <link uri="https://ppr.plantenergy.uwa.edu.au"/>
</comment>
<feature type="transit peptide" description="Mitochondrion" evidence="1">
    <location>
        <begin position="1"/>
        <end position="28"/>
    </location>
</feature>
<feature type="chain" id="PRO_0000363525" description="Pentatricopeptide repeat-containing protein At5g16420, mitochondrial">
    <location>
        <begin position="29"/>
        <end position="535"/>
    </location>
</feature>
<feature type="repeat" description="PPR 1">
    <location>
        <begin position="82"/>
        <end position="112"/>
    </location>
</feature>
<feature type="repeat" description="PPR 2">
    <location>
        <begin position="119"/>
        <end position="153"/>
    </location>
</feature>
<feature type="repeat" description="PPR 3">
    <location>
        <begin position="154"/>
        <end position="189"/>
    </location>
</feature>
<feature type="repeat" description="PPR 4">
    <location>
        <begin position="190"/>
        <end position="224"/>
    </location>
</feature>
<feature type="repeat" description="PPR 5">
    <location>
        <begin position="225"/>
        <end position="259"/>
    </location>
</feature>
<feature type="repeat" description="PPR 6">
    <location>
        <begin position="260"/>
        <end position="294"/>
    </location>
</feature>
<feature type="repeat" description="PPR 7">
    <location>
        <begin position="295"/>
        <end position="329"/>
    </location>
</feature>
<feature type="repeat" description="PPR 8">
    <location>
        <begin position="330"/>
        <end position="364"/>
    </location>
</feature>
<feature type="repeat" description="PPR 9">
    <location>
        <begin position="365"/>
        <end position="395"/>
    </location>
</feature>
<feature type="repeat" description="PPR 10">
    <location>
        <begin position="399"/>
        <end position="433"/>
    </location>
</feature>
<feature type="repeat" description="PPR 11">
    <location>
        <begin position="434"/>
        <end position="468"/>
    </location>
</feature>
<feature type="repeat" description="PPR 12">
    <location>
        <begin position="469"/>
        <end position="503"/>
    </location>
</feature>
<accession>Q9FFE3</accession>